<sequence>MDKRSFKVIVVGGSIAGLTLAHSLDLAGIDYIVLEKHSDPLATVGGSVGLLPNGWRILHQLGLRHQLEQEACPVKVAHMTYPDGFVFSDNFPAAIQERQVPEIQFPIGYMPANDERFGYSLSVLTRQQLIEVLYLGLRDKSKIKVGQRVIKIQHHQNRRGVSVFTESGQEHVGDLVAGADGVHSITRSQMWLQLGQKLDAEKERRQLVAEYSCVFGISSPLKGIPPGEQLIACHDNATVLAFPGKDAHIGWGLIQKLNRPCNSPATTQSSDGETALIMAKSAAGLGLCKDLKFHDLWVNTPKYSFTILEEGLFQIWHHGRIMTPNMAQGANTAIEGAAALANTLRRISQIDKPSEDDINRLLQGYTVRQQKRLRAVHAISRSVTRVHARQGRIKKIIGRYVYPYTPGAALHTFSRIIAPAPCLDYVPMPFPGPGWTRALVSGWSPISGVLLLVIPIIALVYGYSVINFGRDSINN</sequence>
<reference key="1">
    <citation type="journal article" date="2005" name="Nature">
        <title>Sequencing of Aspergillus nidulans and comparative analysis with A. fumigatus and A. oryzae.</title>
        <authorList>
            <person name="Galagan J.E."/>
            <person name="Calvo S.E."/>
            <person name="Cuomo C."/>
            <person name="Ma L.-J."/>
            <person name="Wortman J.R."/>
            <person name="Batzoglou S."/>
            <person name="Lee S.-I."/>
            <person name="Bastuerkmen M."/>
            <person name="Spevak C.C."/>
            <person name="Clutterbuck J."/>
            <person name="Kapitonov V."/>
            <person name="Jurka J."/>
            <person name="Scazzocchio C."/>
            <person name="Farman M.L."/>
            <person name="Butler J."/>
            <person name="Purcell S."/>
            <person name="Harris S."/>
            <person name="Braus G.H."/>
            <person name="Draht O."/>
            <person name="Busch S."/>
            <person name="D'Enfert C."/>
            <person name="Bouchier C."/>
            <person name="Goldman G.H."/>
            <person name="Bell-Pedersen D."/>
            <person name="Griffiths-Jones S."/>
            <person name="Doonan J.H."/>
            <person name="Yu J."/>
            <person name="Vienken K."/>
            <person name="Pain A."/>
            <person name="Freitag M."/>
            <person name="Selker E.U."/>
            <person name="Archer D.B."/>
            <person name="Penalva M.A."/>
            <person name="Oakley B.R."/>
            <person name="Momany M."/>
            <person name="Tanaka T."/>
            <person name="Kumagai T."/>
            <person name="Asai K."/>
            <person name="Machida M."/>
            <person name="Nierman W.C."/>
            <person name="Denning D.W."/>
            <person name="Caddick M.X."/>
            <person name="Hynes M."/>
            <person name="Paoletti M."/>
            <person name="Fischer R."/>
            <person name="Miller B.L."/>
            <person name="Dyer P.S."/>
            <person name="Sachs M.S."/>
            <person name="Osmani S.A."/>
            <person name="Birren B.W."/>
        </authorList>
    </citation>
    <scope>NUCLEOTIDE SEQUENCE [LARGE SCALE GENOMIC DNA]</scope>
    <source>
        <strain>FGSC A4 / ATCC 38163 / CBS 112.46 / NRRL 194 / M139</strain>
    </source>
</reference>
<reference key="2">
    <citation type="journal article" date="2009" name="Fungal Genet. Biol.">
        <title>The 2008 update of the Aspergillus nidulans genome annotation: a community effort.</title>
        <authorList>
            <person name="Wortman J.R."/>
            <person name="Gilsenan J.M."/>
            <person name="Joardar V."/>
            <person name="Deegan J."/>
            <person name="Clutterbuck J."/>
            <person name="Andersen M.R."/>
            <person name="Archer D."/>
            <person name="Bencina M."/>
            <person name="Braus G."/>
            <person name="Coutinho P."/>
            <person name="von Dohren H."/>
            <person name="Doonan J."/>
            <person name="Driessen A.J."/>
            <person name="Durek P."/>
            <person name="Espeso E."/>
            <person name="Fekete E."/>
            <person name="Flipphi M."/>
            <person name="Estrada C.G."/>
            <person name="Geysens S."/>
            <person name="Goldman G."/>
            <person name="de Groot P.W."/>
            <person name="Hansen K."/>
            <person name="Harris S.D."/>
            <person name="Heinekamp T."/>
            <person name="Helmstaedt K."/>
            <person name="Henrissat B."/>
            <person name="Hofmann G."/>
            <person name="Homan T."/>
            <person name="Horio T."/>
            <person name="Horiuchi H."/>
            <person name="James S."/>
            <person name="Jones M."/>
            <person name="Karaffa L."/>
            <person name="Karanyi Z."/>
            <person name="Kato M."/>
            <person name="Keller N."/>
            <person name="Kelly D.E."/>
            <person name="Kiel J.A."/>
            <person name="Kim J.M."/>
            <person name="van der Klei I.J."/>
            <person name="Klis F.M."/>
            <person name="Kovalchuk A."/>
            <person name="Krasevec N."/>
            <person name="Kubicek C.P."/>
            <person name="Liu B."/>
            <person name="Maccabe A."/>
            <person name="Meyer V."/>
            <person name="Mirabito P."/>
            <person name="Miskei M."/>
            <person name="Mos M."/>
            <person name="Mullins J."/>
            <person name="Nelson D.R."/>
            <person name="Nielsen J."/>
            <person name="Oakley B.R."/>
            <person name="Osmani S.A."/>
            <person name="Pakula T."/>
            <person name="Paszewski A."/>
            <person name="Paulsen I."/>
            <person name="Pilsyk S."/>
            <person name="Pocsi I."/>
            <person name="Punt P.J."/>
            <person name="Ram A.F."/>
            <person name="Ren Q."/>
            <person name="Robellet X."/>
            <person name="Robson G."/>
            <person name="Seiboth B."/>
            <person name="van Solingen P."/>
            <person name="Specht T."/>
            <person name="Sun J."/>
            <person name="Taheri-Talesh N."/>
            <person name="Takeshita N."/>
            <person name="Ussery D."/>
            <person name="vanKuyk P.A."/>
            <person name="Visser H."/>
            <person name="van de Vondervoort P.J."/>
            <person name="de Vries R.P."/>
            <person name="Walton J."/>
            <person name="Xiang X."/>
            <person name="Xiong Y."/>
            <person name="Zeng A.P."/>
            <person name="Brandt B.W."/>
            <person name="Cornell M.J."/>
            <person name="van den Hondel C.A."/>
            <person name="Visser J."/>
            <person name="Oliver S.G."/>
            <person name="Turner G."/>
        </authorList>
    </citation>
    <scope>GENOME REANNOTATION</scope>
    <source>
        <strain>FGSC A4 / ATCC 38163 / CBS 112.46 / NRRL 194 / M139</strain>
    </source>
</reference>
<reference key="3">
    <citation type="journal article" date="2019" name="ChemBioChem">
        <title>Discovery and elucidation of the biosynthesis of aspernidgulenes: novel polyenes from Aspergillus nidulans by using serial promoter replacement.</title>
        <authorList>
            <person name="Lin T.S."/>
            <person name="Chen B."/>
            <person name="Chiang Y.M."/>
            <person name="Wang C.C.C."/>
        </authorList>
    </citation>
    <scope>FUNCTION</scope>
    <scope>CATALYTIC ACTIVITY</scope>
    <scope>PATHWAY</scope>
</reference>
<gene>
    <name evidence="5" type="primary">sdgC</name>
    <name type="ORF">AN1786</name>
    <name type="ORF">ANIA_01786</name>
</gene>
<comment type="function">
    <text evidence="4">FAD-dependent monooxygenase; part of the gene cluster that mediates the biosynthesis of the polyenes aspernidgulenes (PubMed:30302871). The carbon backbone of aspernidgulenes is synthesized by the HR-PKS sdgA, which accepts acetyl-CoA as the starter unit and performs malonyl-CoA extensions as well as regioselective methylation and reduction (PubMed:30302871). The resulting nonaketide offloads the HR-PKS by intramolecular lactonization to yield the 5,6-dihydro-alpha-pyrone-containing hexaenoic acids preaspernidgulene A1 and A2 (PubMed:30302871). The FAD-dependent monooxygenase sdgC then installs the first epoxide on the penultimate double bond (PubMed:30302871). Subsequently, the FAD-dependent monooxygenase sdgF presumably generates a ketone intermediate through Meinwald rearrangement involving a hydride shift (PubMed:30302871). Next, sdgC introduces another epoxide on the last olefin of the ketone intermediate after E/Z isomerization (PubMed:30302871). The epoxide hydrolase sdgD then catalyzes stereospecific cyclization of the 5,6-dihydro-alpha-pyrone and opening of the epoxide ring to form an oxygenated trimethylcyclopentanone and an oxabicyclo[2.2.1]heptane unit (PubMed:30302871). Finally, the bicyclic unit undergoes hydrolytic cleavage, either spontaneously or catalyzed by sdgD, to assemble the dimethyl-gamma-lactone moiety in aspernidgulene A1 (PubMed:30302871).</text>
</comment>
<comment type="cofactor">
    <cofactor evidence="6">
        <name>FAD</name>
        <dbReference type="ChEBI" id="CHEBI:57692"/>
    </cofactor>
</comment>
<comment type="pathway">
    <text evidence="4">Secondary metabolite biosynthesis.</text>
</comment>
<comment type="subcellular location">
    <subcellularLocation>
        <location evidence="2">Membrane</location>
        <topology evidence="2">Single-pass membrane protein</topology>
    </subcellularLocation>
</comment>
<comment type="similarity">
    <text evidence="6">Belongs to the paxM FAD-dependent monooxygenase family.</text>
</comment>
<proteinExistence type="evidence at protein level"/>
<dbReference type="EC" id="1.-.-.-" evidence="4"/>
<dbReference type="EMBL" id="BN001307">
    <property type="protein sequence ID" value="CBF85559.1"/>
    <property type="molecule type" value="Genomic_DNA"/>
</dbReference>
<dbReference type="EMBL" id="AACD01000028">
    <property type="protein sequence ID" value="EAA63962.1"/>
    <property type="molecule type" value="Genomic_DNA"/>
</dbReference>
<dbReference type="RefSeq" id="XP_659390.1">
    <property type="nucleotide sequence ID" value="XM_654298.1"/>
</dbReference>
<dbReference type="SMR" id="A0A1U8QHS4"/>
<dbReference type="STRING" id="227321.Q5BCE4"/>
<dbReference type="GlyCosmos" id="A0A1U8QHS4">
    <property type="glycosylation" value="1 site, No reported glycans"/>
</dbReference>
<dbReference type="EnsemblFungi" id="CBF85559">
    <property type="protein sequence ID" value="CBF85559"/>
    <property type="gene ID" value="ANIA_01786"/>
</dbReference>
<dbReference type="GeneID" id="2875010"/>
<dbReference type="KEGG" id="ani:ANIA_01786"/>
<dbReference type="eggNOG" id="KOG2614">
    <property type="taxonomic scope" value="Eukaryota"/>
</dbReference>
<dbReference type="HOGENOM" id="CLU_009665_12_2_1"/>
<dbReference type="InParanoid" id="A0A1U8QHS4"/>
<dbReference type="OMA" id="WAPWISK"/>
<dbReference type="OrthoDB" id="10029326at2759"/>
<dbReference type="Proteomes" id="UP000000560">
    <property type="component" value="Chromosome VII"/>
</dbReference>
<dbReference type="GO" id="GO:0016020">
    <property type="term" value="C:membrane"/>
    <property type="evidence" value="ECO:0007669"/>
    <property type="project" value="UniProtKB-SubCell"/>
</dbReference>
<dbReference type="GO" id="GO:0071949">
    <property type="term" value="F:FAD binding"/>
    <property type="evidence" value="ECO:0007669"/>
    <property type="project" value="InterPro"/>
</dbReference>
<dbReference type="GO" id="GO:0004497">
    <property type="term" value="F:monooxygenase activity"/>
    <property type="evidence" value="ECO:0007669"/>
    <property type="project" value="UniProtKB-KW"/>
</dbReference>
<dbReference type="GO" id="GO:0044550">
    <property type="term" value="P:secondary metabolite biosynthetic process"/>
    <property type="evidence" value="ECO:0000318"/>
    <property type="project" value="GO_Central"/>
</dbReference>
<dbReference type="Gene3D" id="3.50.50.60">
    <property type="entry name" value="FAD/NAD(P)-binding domain"/>
    <property type="match status" value="1"/>
</dbReference>
<dbReference type="InterPro" id="IPR002938">
    <property type="entry name" value="FAD-bd"/>
</dbReference>
<dbReference type="InterPro" id="IPR036188">
    <property type="entry name" value="FAD/NAD-bd_sf"/>
</dbReference>
<dbReference type="InterPro" id="IPR050562">
    <property type="entry name" value="FAD_mOase_fung"/>
</dbReference>
<dbReference type="PANTHER" id="PTHR47356:SF2">
    <property type="entry name" value="FAD-BINDING DOMAIN-CONTAINING PROTEIN-RELATED"/>
    <property type="match status" value="1"/>
</dbReference>
<dbReference type="PANTHER" id="PTHR47356">
    <property type="entry name" value="FAD-DEPENDENT MONOOXYGENASE ASQG-RELATED"/>
    <property type="match status" value="1"/>
</dbReference>
<dbReference type="Pfam" id="PF01494">
    <property type="entry name" value="FAD_binding_3"/>
    <property type="match status" value="1"/>
</dbReference>
<dbReference type="PRINTS" id="PR00420">
    <property type="entry name" value="RNGMNOXGNASE"/>
</dbReference>
<dbReference type="SUPFAM" id="SSF51905">
    <property type="entry name" value="FAD/NAD(P)-binding domain"/>
    <property type="match status" value="1"/>
</dbReference>
<organism>
    <name type="scientific">Emericella nidulans (strain FGSC A4 / ATCC 38163 / CBS 112.46 / NRRL 194 / M139)</name>
    <name type="common">Aspergillus nidulans</name>
    <dbReference type="NCBI Taxonomy" id="227321"/>
    <lineage>
        <taxon>Eukaryota</taxon>
        <taxon>Fungi</taxon>
        <taxon>Dikarya</taxon>
        <taxon>Ascomycota</taxon>
        <taxon>Pezizomycotina</taxon>
        <taxon>Eurotiomycetes</taxon>
        <taxon>Eurotiomycetidae</taxon>
        <taxon>Eurotiales</taxon>
        <taxon>Aspergillaceae</taxon>
        <taxon>Aspergillus</taxon>
        <taxon>Aspergillus subgen. Nidulantes</taxon>
    </lineage>
</organism>
<feature type="signal peptide" evidence="2">
    <location>
        <begin position="1"/>
        <end position="23"/>
    </location>
</feature>
<feature type="chain" id="PRO_0000451915" description="FAD-dependent monooxygenase sdgC" evidence="2">
    <location>
        <begin position="24"/>
        <end position="475"/>
    </location>
</feature>
<feature type="transmembrane region" description="Helical" evidence="2">
    <location>
        <begin position="446"/>
        <end position="466"/>
    </location>
</feature>
<feature type="binding site" evidence="1">
    <location>
        <position position="35"/>
    </location>
    <ligand>
        <name>FAD</name>
        <dbReference type="ChEBI" id="CHEBI:57692"/>
    </ligand>
</feature>
<feature type="binding site" evidence="1">
    <location>
        <position position="49"/>
    </location>
    <ligand>
        <name>FAD</name>
        <dbReference type="ChEBI" id="CHEBI:57692"/>
    </ligand>
</feature>
<feature type="binding site" evidence="1">
    <location>
        <position position="126"/>
    </location>
    <ligand>
        <name>FAD</name>
        <dbReference type="ChEBI" id="CHEBI:57692"/>
    </ligand>
</feature>
<feature type="binding site" evidence="1">
    <location>
        <position position="330"/>
    </location>
    <ligand>
        <name>FAD</name>
        <dbReference type="ChEBI" id="CHEBI:57692"/>
    </ligand>
</feature>
<feature type="glycosylation site" description="N-linked (GlcNAc...) asparagine" evidence="3">
    <location>
        <position position="236"/>
    </location>
</feature>
<accession>A0A1U8QHS4</accession>
<accession>C8VPE4</accession>
<accession>Q5BCE4</accession>
<protein>
    <recommendedName>
        <fullName evidence="5">FAD-dependent monooxygenase sdgC</fullName>
        <ecNumber evidence="4">1.-.-.-</ecNumber>
    </recommendedName>
    <alternativeName>
        <fullName evidence="5">Aspernidgulenes biosynthesis cluster protein C</fullName>
    </alternativeName>
</protein>
<name>SDGC_EMENI</name>
<keyword id="KW-0274">FAD</keyword>
<keyword id="KW-0285">Flavoprotein</keyword>
<keyword id="KW-0325">Glycoprotein</keyword>
<keyword id="KW-0472">Membrane</keyword>
<keyword id="KW-0503">Monooxygenase</keyword>
<keyword id="KW-0560">Oxidoreductase</keyword>
<keyword id="KW-1185">Reference proteome</keyword>
<keyword id="KW-0732">Signal</keyword>
<keyword id="KW-0812">Transmembrane</keyword>
<keyword id="KW-1133">Transmembrane helix</keyword>
<evidence type="ECO:0000250" key="1">
    <source>
        <dbReference type="UniProtKB" id="B8M9J8"/>
    </source>
</evidence>
<evidence type="ECO:0000255" key="2"/>
<evidence type="ECO:0000255" key="3">
    <source>
        <dbReference type="PROSITE-ProRule" id="PRU00498"/>
    </source>
</evidence>
<evidence type="ECO:0000269" key="4">
    <source>
    </source>
</evidence>
<evidence type="ECO:0000303" key="5">
    <source>
    </source>
</evidence>
<evidence type="ECO:0000305" key="6"/>